<gene>
    <name evidence="1" type="primary">folE2</name>
    <name type="ordered locus">azo1197</name>
</gene>
<dbReference type="EC" id="3.5.4.16" evidence="1"/>
<dbReference type="EMBL" id="AM406670">
    <property type="protein sequence ID" value="CAL93814.1"/>
    <property type="molecule type" value="Genomic_DNA"/>
</dbReference>
<dbReference type="RefSeq" id="WP_011764930.1">
    <property type="nucleotide sequence ID" value="NC_008702.1"/>
</dbReference>
<dbReference type="SMR" id="A1K4Q9"/>
<dbReference type="STRING" id="62928.azo1197"/>
<dbReference type="KEGG" id="aoa:dqs_1312"/>
<dbReference type="KEGG" id="azo:azo1197"/>
<dbReference type="eggNOG" id="COG1469">
    <property type="taxonomic scope" value="Bacteria"/>
</dbReference>
<dbReference type="HOGENOM" id="CLU_062816_1_1_4"/>
<dbReference type="OrthoDB" id="9774824at2"/>
<dbReference type="UniPathway" id="UPA00848">
    <property type="reaction ID" value="UER00151"/>
</dbReference>
<dbReference type="Proteomes" id="UP000002588">
    <property type="component" value="Chromosome"/>
</dbReference>
<dbReference type="GO" id="GO:0003934">
    <property type="term" value="F:GTP cyclohydrolase I activity"/>
    <property type="evidence" value="ECO:0007669"/>
    <property type="project" value="UniProtKB-UniRule"/>
</dbReference>
<dbReference type="GO" id="GO:0046654">
    <property type="term" value="P:tetrahydrofolate biosynthetic process"/>
    <property type="evidence" value="ECO:0007669"/>
    <property type="project" value="UniProtKB-UniRule"/>
</dbReference>
<dbReference type="Gene3D" id="3.10.270.10">
    <property type="entry name" value="Urate Oxidase"/>
    <property type="match status" value="1"/>
</dbReference>
<dbReference type="HAMAP" id="MF_01527_B">
    <property type="entry name" value="GTP_cyclohydrol_B"/>
    <property type="match status" value="1"/>
</dbReference>
<dbReference type="InterPro" id="IPR022838">
    <property type="entry name" value="GTP_cyclohydrolase_FolE2"/>
</dbReference>
<dbReference type="InterPro" id="IPR003801">
    <property type="entry name" value="GTP_cyclohydrolase_FolE2/MptA"/>
</dbReference>
<dbReference type="NCBIfam" id="NF010200">
    <property type="entry name" value="PRK13674.1-1"/>
    <property type="match status" value="1"/>
</dbReference>
<dbReference type="PANTHER" id="PTHR36445">
    <property type="entry name" value="GTP CYCLOHYDROLASE MPTA"/>
    <property type="match status" value="1"/>
</dbReference>
<dbReference type="PANTHER" id="PTHR36445:SF1">
    <property type="entry name" value="GTP CYCLOHYDROLASE MPTA"/>
    <property type="match status" value="1"/>
</dbReference>
<dbReference type="Pfam" id="PF02649">
    <property type="entry name" value="GCHY-1"/>
    <property type="match status" value="1"/>
</dbReference>
<name>GCH4_AZOSB</name>
<comment type="function">
    <text evidence="1">Converts GTP to 7,8-dihydroneopterin triphosphate.</text>
</comment>
<comment type="catalytic activity">
    <reaction evidence="1">
        <text>GTP + H2O = 7,8-dihydroneopterin 3'-triphosphate + formate + H(+)</text>
        <dbReference type="Rhea" id="RHEA:17473"/>
        <dbReference type="ChEBI" id="CHEBI:15377"/>
        <dbReference type="ChEBI" id="CHEBI:15378"/>
        <dbReference type="ChEBI" id="CHEBI:15740"/>
        <dbReference type="ChEBI" id="CHEBI:37565"/>
        <dbReference type="ChEBI" id="CHEBI:58462"/>
        <dbReference type="EC" id="3.5.4.16"/>
    </reaction>
</comment>
<comment type="pathway">
    <text evidence="1">Cofactor biosynthesis; 7,8-dihydroneopterin triphosphate biosynthesis; 7,8-dihydroneopterin triphosphate from GTP: step 1/1.</text>
</comment>
<comment type="similarity">
    <text evidence="1">Belongs to the GTP cyclohydrolase IV family.</text>
</comment>
<accession>A1K4Q9</accession>
<sequence length="269" mass="30426">MNSPLAHAIPDVQNSEDSRQIAINKVGIKSIRHPVKVSDKNGGVQHTVANFNMYVGLPHNFKGTHMSRFIEILNSNEREISVESFEPMLREMVKRLEAETGHVEMTFPYFINKSAPVSGVQSLMDYEVTFTGEIHEGGRYEFTMKVVVPVTSLCPCSKKISAYGAHNQRSHVTVTATLNDHLWIEDVVQLVEGQASCEVYGLLKRPDEKYVTERAYDNPKFVEDMVRDVAGLLNKEVRIDAYAVESENFESIHNHSAYALIERDKRIEA</sequence>
<keyword id="KW-0378">Hydrolase</keyword>
<keyword id="KW-1185">Reference proteome</keyword>
<organism>
    <name type="scientific">Azoarcus sp. (strain BH72)</name>
    <dbReference type="NCBI Taxonomy" id="418699"/>
    <lineage>
        <taxon>Bacteria</taxon>
        <taxon>Pseudomonadati</taxon>
        <taxon>Pseudomonadota</taxon>
        <taxon>Betaproteobacteria</taxon>
        <taxon>Rhodocyclales</taxon>
        <taxon>Zoogloeaceae</taxon>
        <taxon>Azoarcus</taxon>
    </lineage>
</organism>
<reference key="1">
    <citation type="journal article" date="2006" name="Nat. Biotechnol.">
        <title>Complete genome of the mutualistic, N2-fixing grass endophyte Azoarcus sp. strain BH72.</title>
        <authorList>
            <person name="Krause A."/>
            <person name="Ramakumar A."/>
            <person name="Bartels D."/>
            <person name="Battistoni F."/>
            <person name="Bekel T."/>
            <person name="Boch J."/>
            <person name="Boehm M."/>
            <person name="Friedrich F."/>
            <person name="Hurek T."/>
            <person name="Krause L."/>
            <person name="Linke B."/>
            <person name="McHardy A.C."/>
            <person name="Sarkar A."/>
            <person name="Schneiker S."/>
            <person name="Syed A.A."/>
            <person name="Thauer R."/>
            <person name="Vorhoelter F.-J."/>
            <person name="Weidner S."/>
            <person name="Puehler A."/>
            <person name="Reinhold-Hurek B."/>
            <person name="Kaiser O."/>
            <person name="Goesmann A."/>
        </authorList>
    </citation>
    <scope>NUCLEOTIDE SEQUENCE [LARGE SCALE GENOMIC DNA]</scope>
    <source>
        <strain>BH72</strain>
    </source>
</reference>
<proteinExistence type="inferred from homology"/>
<evidence type="ECO:0000255" key="1">
    <source>
        <dbReference type="HAMAP-Rule" id="MF_01527"/>
    </source>
</evidence>
<feature type="chain" id="PRO_0000289473" description="GTP cyclohydrolase FolE2">
    <location>
        <begin position="1"/>
        <end position="269"/>
    </location>
</feature>
<feature type="site" description="May be catalytically important" evidence="1">
    <location>
        <position position="154"/>
    </location>
</feature>
<protein>
    <recommendedName>
        <fullName evidence="1">GTP cyclohydrolase FolE2</fullName>
        <ecNumber evidence="1">3.5.4.16</ecNumber>
    </recommendedName>
</protein>